<accession>Q9C8G4</accession>
<accession>Q1PFQ4</accession>
<evidence type="ECO:0000250" key="1"/>
<evidence type="ECO:0000255" key="2"/>
<evidence type="ECO:0000305" key="3"/>
<reference key="1">
    <citation type="journal article" date="2000" name="Nature">
        <title>Sequence and analysis of chromosome 1 of the plant Arabidopsis thaliana.</title>
        <authorList>
            <person name="Theologis A."/>
            <person name="Ecker J.R."/>
            <person name="Palm C.J."/>
            <person name="Federspiel N.A."/>
            <person name="Kaul S."/>
            <person name="White O."/>
            <person name="Alonso J."/>
            <person name="Altafi H."/>
            <person name="Araujo R."/>
            <person name="Bowman C.L."/>
            <person name="Brooks S.Y."/>
            <person name="Buehler E."/>
            <person name="Chan A."/>
            <person name="Chao Q."/>
            <person name="Chen H."/>
            <person name="Cheuk R.F."/>
            <person name="Chin C.W."/>
            <person name="Chung M.K."/>
            <person name="Conn L."/>
            <person name="Conway A.B."/>
            <person name="Conway A.R."/>
            <person name="Creasy T.H."/>
            <person name="Dewar K."/>
            <person name="Dunn P."/>
            <person name="Etgu P."/>
            <person name="Feldblyum T.V."/>
            <person name="Feng J.-D."/>
            <person name="Fong B."/>
            <person name="Fujii C.Y."/>
            <person name="Gill J.E."/>
            <person name="Goldsmith A.D."/>
            <person name="Haas B."/>
            <person name="Hansen N.F."/>
            <person name="Hughes B."/>
            <person name="Huizar L."/>
            <person name="Hunter J.L."/>
            <person name="Jenkins J."/>
            <person name="Johnson-Hopson C."/>
            <person name="Khan S."/>
            <person name="Khaykin E."/>
            <person name="Kim C.J."/>
            <person name="Koo H.L."/>
            <person name="Kremenetskaia I."/>
            <person name="Kurtz D.B."/>
            <person name="Kwan A."/>
            <person name="Lam B."/>
            <person name="Langin-Hooper S."/>
            <person name="Lee A."/>
            <person name="Lee J.M."/>
            <person name="Lenz C.A."/>
            <person name="Li J.H."/>
            <person name="Li Y.-P."/>
            <person name="Lin X."/>
            <person name="Liu S.X."/>
            <person name="Liu Z.A."/>
            <person name="Luros J.S."/>
            <person name="Maiti R."/>
            <person name="Marziali A."/>
            <person name="Militscher J."/>
            <person name="Miranda M."/>
            <person name="Nguyen M."/>
            <person name="Nierman W.C."/>
            <person name="Osborne B.I."/>
            <person name="Pai G."/>
            <person name="Peterson J."/>
            <person name="Pham P.K."/>
            <person name="Rizzo M."/>
            <person name="Rooney T."/>
            <person name="Rowley D."/>
            <person name="Sakano H."/>
            <person name="Salzberg S.L."/>
            <person name="Schwartz J.R."/>
            <person name="Shinn P."/>
            <person name="Southwick A.M."/>
            <person name="Sun H."/>
            <person name="Tallon L.J."/>
            <person name="Tambunga G."/>
            <person name="Toriumi M.J."/>
            <person name="Town C.D."/>
            <person name="Utterback T."/>
            <person name="Van Aken S."/>
            <person name="Vaysberg M."/>
            <person name="Vysotskaia V.S."/>
            <person name="Walker M."/>
            <person name="Wu D."/>
            <person name="Yu G."/>
            <person name="Fraser C.M."/>
            <person name="Venter J.C."/>
            <person name="Davis R.W."/>
        </authorList>
    </citation>
    <scope>NUCLEOTIDE SEQUENCE [LARGE SCALE GENOMIC DNA]</scope>
    <source>
        <strain>cv. Columbia</strain>
    </source>
</reference>
<reference key="2">
    <citation type="journal article" date="2017" name="Plant J.">
        <title>Araport11: a complete reannotation of the Arabidopsis thaliana reference genome.</title>
        <authorList>
            <person name="Cheng C.Y."/>
            <person name="Krishnakumar V."/>
            <person name="Chan A.P."/>
            <person name="Thibaud-Nissen F."/>
            <person name="Schobel S."/>
            <person name="Town C.D."/>
        </authorList>
    </citation>
    <scope>GENOME REANNOTATION</scope>
    <source>
        <strain>cv. Columbia</strain>
    </source>
</reference>
<reference key="3">
    <citation type="journal article" date="2006" name="Plant Biotechnol. J.">
        <title>Simultaneous high-throughput recombinational cloning of open reading frames in closed and open configurations.</title>
        <authorList>
            <person name="Underwood B.A."/>
            <person name="Vanderhaeghen R."/>
            <person name="Whitford R."/>
            <person name="Town C.D."/>
            <person name="Hilson P."/>
        </authorList>
    </citation>
    <scope>NUCLEOTIDE SEQUENCE [LARGE SCALE MRNA]</scope>
    <source>
        <strain>cv. Columbia</strain>
    </source>
</reference>
<keyword id="KW-0106">Calcium</keyword>
<keyword id="KW-0325">Glycoprotein</keyword>
<keyword id="KW-0456">Lyase</keyword>
<keyword id="KW-0479">Metal-binding</keyword>
<keyword id="KW-1185">Reference proteome</keyword>
<keyword id="KW-0732">Signal</keyword>
<proteinExistence type="evidence at transcript level"/>
<dbReference type="EC" id="4.2.2.2"/>
<dbReference type="EMBL" id="AC025295">
    <property type="protein sequence ID" value="AAG51103.1"/>
    <property type="molecule type" value="Genomic_DNA"/>
</dbReference>
<dbReference type="EMBL" id="CP002684">
    <property type="protein sequence ID" value="AEE31208.1"/>
    <property type="molecule type" value="Genomic_DNA"/>
</dbReference>
<dbReference type="EMBL" id="DQ446309">
    <property type="protein sequence ID" value="ABE65673.1"/>
    <property type="molecule type" value="mRNA"/>
</dbReference>
<dbReference type="PIR" id="G86427">
    <property type="entry name" value="G86427"/>
</dbReference>
<dbReference type="RefSeq" id="NP_174324.1">
    <property type="nucleotide sequence ID" value="NM_102772.3"/>
</dbReference>
<dbReference type="SMR" id="Q9C8G4"/>
<dbReference type="FunCoup" id="Q9C8G4">
    <property type="interactions" value="120"/>
</dbReference>
<dbReference type="STRING" id="3702.Q9C8G4"/>
<dbReference type="CAZy" id="PL1">
    <property type="family name" value="Polysaccharide Lyase Family 1"/>
</dbReference>
<dbReference type="GlyGen" id="Q9C8G4">
    <property type="glycosylation" value="1 site"/>
</dbReference>
<dbReference type="PaxDb" id="3702-AT1G30350.1"/>
<dbReference type="ProteomicsDB" id="234678"/>
<dbReference type="EnsemblPlants" id="AT1G30350.1">
    <property type="protein sequence ID" value="AT1G30350.1"/>
    <property type="gene ID" value="AT1G30350"/>
</dbReference>
<dbReference type="GeneID" id="839915"/>
<dbReference type="Gramene" id="AT1G30350.1">
    <property type="protein sequence ID" value="AT1G30350.1"/>
    <property type="gene ID" value="AT1G30350"/>
</dbReference>
<dbReference type="KEGG" id="ath:AT1G30350"/>
<dbReference type="Araport" id="AT1G30350"/>
<dbReference type="TAIR" id="AT1G30350"/>
<dbReference type="eggNOG" id="ENOG502QSYA">
    <property type="taxonomic scope" value="Eukaryota"/>
</dbReference>
<dbReference type="HOGENOM" id="CLU_026608_0_1_1"/>
<dbReference type="InParanoid" id="Q9C8G4"/>
<dbReference type="OMA" id="LWITFEH"/>
<dbReference type="PhylomeDB" id="Q9C8G4"/>
<dbReference type="BioCyc" id="ARA:AT1G30350-MONOMER"/>
<dbReference type="UniPathway" id="UPA00545">
    <property type="reaction ID" value="UER00824"/>
</dbReference>
<dbReference type="PRO" id="PR:Q9C8G4"/>
<dbReference type="Proteomes" id="UP000006548">
    <property type="component" value="Chromosome 1"/>
</dbReference>
<dbReference type="ExpressionAtlas" id="Q9C8G4">
    <property type="expression patterns" value="baseline and differential"/>
</dbReference>
<dbReference type="GO" id="GO:0046872">
    <property type="term" value="F:metal ion binding"/>
    <property type="evidence" value="ECO:0007669"/>
    <property type="project" value="UniProtKB-KW"/>
</dbReference>
<dbReference type="GO" id="GO:0030570">
    <property type="term" value="F:pectate lyase activity"/>
    <property type="evidence" value="ECO:0007669"/>
    <property type="project" value="UniProtKB-EC"/>
</dbReference>
<dbReference type="GO" id="GO:0045490">
    <property type="term" value="P:pectin catabolic process"/>
    <property type="evidence" value="ECO:0007669"/>
    <property type="project" value="UniProtKB-UniPathway"/>
</dbReference>
<dbReference type="Gene3D" id="2.160.20.10">
    <property type="entry name" value="Single-stranded right-handed beta-helix, Pectin lyase-like"/>
    <property type="match status" value="1"/>
</dbReference>
<dbReference type="InterPro" id="IPR018082">
    <property type="entry name" value="AmbAllergen"/>
</dbReference>
<dbReference type="InterPro" id="IPR002022">
    <property type="entry name" value="Pec_lyase"/>
</dbReference>
<dbReference type="InterPro" id="IPR012334">
    <property type="entry name" value="Pectin_lyas_fold"/>
</dbReference>
<dbReference type="InterPro" id="IPR011050">
    <property type="entry name" value="Pectin_lyase_fold/virulence"/>
</dbReference>
<dbReference type="InterPro" id="IPR045032">
    <property type="entry name" value="PEL"/>
</dbReference>
<dbReference type="PANTHER" id="PTHR31683">
    <property type="entry name" value="PECTATE LYASE 18-RELATED"/>
    <property type="match status" value="1"/>
</dbReference>
<dbReference type="PANTHER" id="PTHR31683:SF105">
    <property type="entry name" value="PECTATE LYASE 2-RELATED"/>
    <property type="match status" value="1"/>
</dbReference>
<dbReference type="Pfam" id="PF00544">
    <property type="entry name" value="Pectate_lyase_4"/>
    <property type="match status" value="1"/>
</dbReference>
<dbReference type="PRINTS" id="PR00807">
    <property type="entry name" value="AMBALLERGEN"/>
</dbReference>
<dbReference type="SMART" id="SM00656">
    <property type="entry name" value="Amb_all"/>
    <property type="match status" value="1"/>
</dbReference>
<dbReference type="SUPFAM" id="SSF51126">
    <property type="entry name" value="Pectin lyase-like"/>
    <property type="match status" value="1"/>
</dbReference>
<name>PLY4_ARATH</name>
<sequence length="368" mass="40576">MASLVVIVSLLLAAFASPLLETAHSYNVTAPRVSLNPIDACWRRNPKWATNRQALAHCAVGYGKAAIGGKNGPIYVVTNPSDNPTRPSPGTLRYAVSQPKPLWITFARDMVIVLKSQLMINSYKTIDGRGAKVEIANGPCLRIRQVKHVIIHGISIHDCKADPNGMDGDGIRVFQSTHVWIDHCFLSRCHDGLIDVIVSSTAVTISNNYFTQHDKVMLLGHDDSYMGDKDMRVTIAFNTFGPGLIERMPRVRRGYAHVANNRYEKWQMYAIGGSANPIIFSEGNYFVAPEKRSSKQVTKRMMAGPDSKRWKWGTSRDVFMNGAFFGPPGVIVRPLYKGGEGFRVAHGSLVPSLTSSAGPLRCYVGRIC</sequence>
<feature type="signal peptide" evidence="2">
    <location>
        <begin position="1"/>
        <end position="25"/>
    </location>
</feature>
<feature type="chain" id="PRO_0000024868" description="Probable pectate lyase 4">
    <location>
        <begin position="26"/>
        <end position="368"/>
    </location>
</feature>
<feature type="active site" evidence="2">
    <location>
        <position position="247"/>
    </location>
</feature>
<feature type="binding site" evidence="1">
    <location>
        <position position="167"/>
    </location>
    <ligand>
        <name>Ca(2+)</name>
        <dbReference type="ChEBI" id="CHEBI:29108"/>
    </ligand>
</feature>
<feature type="binding site" evidence="1">
    <location>
        <position position="191"/>
    </location>
    <ligand>
        <name>Ca(2+)</name>
        <dbReference type="ChEBI" id="CHEBI:29108"/>
    </ligand>
</feature>
<feature type="binding site" evidence="1">
    <location>
        <position position="195"/>
    </location>
    <ligand>
        <name>Ca(2+)</name>
        <dbReference type="ChEBI" id="CHEBI:29108"/>
    </ligand>
</feature>
<feature type="glycosylation site" description="N-linked (GlcNAc...) asparagine" evidence="2">
    <location>
        <position position="27"/>
    </location>
</feature>
<comment type="catalytic activity">
    <reaction>
        <text>Eliminative cleavage of (1-&gt;4)-alpha-D-galacturonan to give oligosaccharides with 4-deoxy-alpha-D-galact-4-enuronosyl groups at their non-reducing ends.</text>
        <dbReference type="EC" id="4.2.2.2"/>
    </reaction>
</comment>
<comment type="cofactor">
    <cofactor evidence="1">
        <name>Ca(2+)</name>
        <dbReference type="ChEBI" id="CHEBI:29108"/>
    </cofactor>
    <text evidence="1">Binds 1 Ca(2+) ion. Required for its activity.</text>
</comment>
<comment type="pathway">
    <text>Glycan metabolism; pectin degradation; 2-dehydro-3-deoxy-D-gluconate from pectin: step 2/5.</text>
</comment>
<comment type="similarity">
    <text evidence="3">Belongs to the polysaccharide lyase 1 family.</text>
</comment>
<organism>
    <name type="scientific">Arabidopsis thaliana</name>
    <name type="common">Mouse-ear cress</name>
    <dbReference type="NCBI Taxonomy" id="3702"/>
    <lineage>
        <taxon>Eukaryota</taxon>
        <taxon>Viridiplantae</taxon>
        <taxon>Streptophyta</taxon>
        <taxon>Embryophyta</taxon>
        <taxon>Tracheophyta</taxon>
        <taxon>Spermatophyta</taxon>
        <taxon>Magnoliopsida</taxon>
        <taxon>eudicotyledons</taxon>
        <taxon>Gunneridae</taxon>
        <taxon>Pentapetalae</taxon>
        <taxon>rosids</taxon>
        <taxon>malvids</taxon>
        <taxon>Brassicales</taxon>
        <taxon>Brassicaceae</taxon>
        <taxon>Camelineae</taxon>
        <taxon>Arabidopsis</taxon>
    </lineage>
</organism>
<protein>
    <recommendedName>
        <fullName>Probable pectate lyase 4</fullName>
        <ecNumber>4.2.2.2</ecNumber>
    </recommendedName>
</protein>
<gene>
    <name type="ordered locus">At1g30350</name>
    <name type="ORF">T4K22.5</name>
</gene>